<protein>
    <recommendedName>
        <fullName evidence="1">Anhydro-N-acetylmuramic acid kinase</fullName>
        <ecNumber evidence="1">2.7.1.170</ecNumber>
    </recommendedName>
    <alternativeName>
        <fullName evidence="1">AnhMurNAc kinase</fullName>
    </alternativeName>
</protein>
<accession>A3N2I3</accession>
<keyword id="KW-0067">ATP-binding</keyword>
<keyword id="KW-0119">Carbohydrate metabolism</keyword>
<keyword id="KW-0418">Kinase</keyword>
<keyword id="KW-0547">Nucleotide-binding</keyword>
<keyword id="KW-1185">Reference proteome</keyword>
<keyword id="KW-0808">Transferase</keyword>
<gene>
    <name evidence="1" type="primary">anmK</name>
    <name type="ordered locus">APL_1535</name>
</gene>
<sequence>MTKNLYLGVMSGTSLDGVDLCVMDFAKNPPKLTACGFTPMPEDLRTDLSHLLKSGETSLQKLGEIDHRLGLLYAESIKRFLAEHQLSASDIQAIGCHGQTVWHSPNGNFPFTMQIGDMNLVAAHTGITTIADFRRKDMAVGGQGAPLVPAFHEGIFASPERLTVVLNIGGISNISVLAPQQPTIGYDVSVGNALMDSWIELHQAKRYDKNAEWAKTGTLIPALLDSLLDEPFFKLPAPKSTGRELFNLEWLAKKSANLTAYRPEDVQRTLAEFTVQSVVNELKTLESEKQCLLLACGGGARNPLLMQRFSELLPKWQVATTDEYGLDIDYVEAAAFAWLAYQRVHNLTNNLPSVTGAKEPVSLGVIYPK</sequence>
<feature type="chain" id="PRO_1000067341" description="Anhydro-N-acetylmuramic acid kinase">
    <location>
        <begin position="1"/>
        <end position="369"/>
    </location>
</feature>
<feature type="binding site" evidence="1">
    <location>
        <begin position="12"/>
        <end position="19"/>
    </location>
    <ligand>
        <name>ATP</name>
        <dbReference type="ChEBI" id="CHEBI:30616"/>
    </ligand>
</feature>
<dbReference type="EC" id="2.7.1.170" evidence="1"/>
<dbReference type="EMBL" id="CP000569">
    <property type="protein sequence ID" value="ABN74619.1"/>
    <property type="molecule type" value="Genomic_DNA"/>
</dbReference>
<dbReference type="RefSeq" id="WP_009875243.1">
    <property type="nucleotide sequence ID" value="NC_009053.1"/>
</dbReference>
<dbReference type="SMR" id="A3N2I3"/>
<dbReference type="STRING" id="416269.APL_1535"/>
<dbReference type="EnsemblBacteria" id="ABN74619">
    <property type="protein sequence ID" value="ABN74619"/>
    <property type="gene ID" value="APL_1535"/>
</dbReference>
<dbReference type="KEGG" id="apl:APL_1535"/>
<dbReference type="PATRIC" id="fig|416269.6.peg.1598"/>
<dbReference type="eggNOG" id="COG2377">
    <property type="taxonomic scope" value="Bacteria"/>
</dbReference>
<dbReference type="HOGENOM" id="CLU_038782_0_0_6"/>
<dbReference type="UniPathway" id="UPA00343"/>
<dbReference type="UniPathway" id="UPA00544"/>
<dbReference type="Proteomes" id="UP000001432">
    <property type="component" value="Chromosome"/>
</dbReference>
<dbReference type="GO" id="GO:0005524">
    <property type="term" value="F:ATP binding"/>
    <property type="evidence" value="ECO:0007669"/>
    <property type="project" value="UniProtKB-UniRule"/>
</dbReference>
<dbReference type="GO" id="GO:0016301">
    <property type="term" value="F:kinase activity"/>
    <property type="evidence" value="ECO:0007669"/>
    <property type="project" value="UniProtKB-KW"/>
</dbReference>
<dbReference type="GO" id="GO:0016773">
    <property type="term" value="F:phosphotransferase activity, alcohol group as acceptor"/>
    <property type="evidence" value="ECO:0007669"/>
    <property type="project" value="UniProtKB-UniRule"/>
</dbReference>
<dbReference type="GO" id="GO:0097175">
    <property type="term" value="P:1,6-anhydro-N-acetyl-beta-muramic acid catabolic process"/>
    <property type="evidence" value="ECO:0007669"/>
    <property type="project" value="UniProtKB-UniRule"/>
</dbReference>
<dbReference type="GO" id="GO:0006040">
    <property type="term" value="P:amino sugar metabolic process"/>
    <property type="evidence" value="ECO:0007669"/>
    <property type="project" value="InterPro"/>
</dbReference>
<dbReference type="GO" id="GO:0009254">
    <property type="term" value="P:peptidoglycan turnover"/>
    <property type="evidence" value="ECO:0007669"/>
    <property type="project" value="UniProtKB-UniRule"/>
</dbReference>
<dbReference type="CDD" id="cd24050">
    <property type="entry name" value="ASKHA_NBD_ANMK"/>
    <property type="match status" value="1"/>
</dbReference>
<dbReference type="Gene3D" id="3.30.420.40">
    <property type="match status" value="2"/>
</dbReference>
<dbReference type="HAMAP" id="MF_01270">
    <property type="entry name" value="AnhMurNAc_kinase"/>
    <property type="match status" value="1"/>
</dbReference>
<dbReference type="InterPro" id="IPR005338">
    <property type="entry name" value="Anhydro_N_Ac-Mur_kinase"/>
</dbReference>
<dbReference type="InterPro" id="IPR043129">
    <property type="entry name" value="ATPase_NBD"/>
</dbReference>
<dbReference type="NCBIfam" id="NF007139">
    <property type="entry name" value="PRK09585.1-3"/>
    <property type="match status" value="1"/>
</dbReference>
<dbReference type="PANTHER" id="PTHR30605">
    <property type="entry name" value="ANHYDRO-N-ACETYLMURAMIC ACID KINASE"/>
    <property type="match status" value="1"/>
</dbReference>
<dbReference type="PANTHER" id="PTHR30605:SF0">
    <property type="entry name" value="ANHYDRO-N-ACETYLMURAMIC ACID KINASE"/>
    <property type="match status" value="1"/>
</dbReference>
<dbReference type="Pfam" id="PF03702">
    <property type="entry name" value="AnmK"/>
    <property type="match status" value="1"/>
</dbReference>
<dbReference type="SUPFAM" id="SSF53067">
    <property type="entry name" value="Actin-like ATPase domain"/>
    <property type="match status" value="1"/>
</dbReference>
<proteinExistence type="inferred from homology"/>
<organism>
    <name type="scientific">Actinobacillus pleuropneumoniae serotype 5b (strain L20)</name>
    <dbReference type="NCBI Taxonomy" id="416269"/>
    <lineage>
        <taxon>Bacteria</taxon>
        <taxon>Pseudomonadati</taxon>
        <taxon>Pseudomonadota</taxon>
        <taxon>Gammaproteobacteria</taxon>
        <taxon>Pasteurellales</taxon>
        <taxon>Pasteurellaceae</taxon>
        <taxon>Actinobacillus</taxon>
    </lineage>
</organism>
<comment type="function">
    <text evidence="1">Catalyzes the specific phosphorylation of 1,6-anhydro-N-acetylmuramic acid (anhMurNAc) with the simultaneous cleavage of the 1,6-anhydro ring, generating MurNAc-6-P. Is required for the utilization of anhMurNAc either imported from the medium or derived from its own cell wall murein, and thus plays a role in cell wall recycling.</text>
</comment>
<comment type="catalytic activity">
    <reaction evidence="1">
        <text>1,6-anhydro-N-acetyl-beta-muramate + ATP + H2O = N-acetyl-D-muramate 6-phosphate + ADP + H(+)</text>
        <dbReference type="Rhea" id="RHEA:24952"/>
        <dbReference type="ChEBI" id="CHEBI:15377"/>
        <dbReference type="ChEBI" id="CHEBI:15378"/>
        <dbReference type="ChEBI" id="CHEBI:30616"/>
        <dbReference type="ChEBI" id="CHEBI:58690"/>
        <dbReference type="ChEBI" id="CHEBI:58722"/>
        <dbReference type="ChEBI" id="CHEBI:456216"/>
        <dbReference type="EC" id="2.7.1.170"/>
    </reaction>
</comment>
<comment type="pathway">
    <text evidence="1">Amino-sugar metabolism; 1,6-anhydro-N-acetylmuramate degradation.</text>
</comment>
<comment type="pathway">
    <text evidence="1">Cell wall biogenesis; peptidoglycan recycling.</text>
</comment>
<comment type="similarity">
    <text evidence="1">Belongs to the anhydro-N-acetylmuramic acid kinase family.</text>
</comment>
<evidence type="ECO:0000255" key="1">
    <source>
        <dbReference type="HAMAP-Rule" id="MF_01270"/>
    </source>
</evidence>
<name>ANMK_ACTP2</name>
<reference key="1">
    <citation type="journal article" date="2008" name="J. Bacteriol.">
        <title>The complete genome sequence of Actinobacillus pleuropneumoniae L20 (serotype 5b).</title>
        <authorList>
            <person name="Foote S.J."/>
            <person name="Bosse J.T."/>
            <person name="Bouevitch A.B."/>
            <person name="Langford P.R."/>
            <person name="Young N.M."/>
            <person name="Nash J.H.E."/>
        </authorList>
    </citation>
    <scope>NUCLEOTIDE SEQUENCE [LARGE SCALE GENOMIC DNA]</scope>
    <source>
        <strain>L20</strain>
    </source>
</reference>